<keyword id="KW-0496">Mitochondrion</keyword>
<keyword id="KW-0687">Ribonucleoprotein</keyword>
<keyword id="KW-0689">Ribosomal protein</keyword>
<gene>
    <name type="primary">RPS14</name>
</gene>
<sequence>MSEKRNIRDHKRRLLAAKYELRRKLYKAFCKDSDLPSDMRDKLRYKLSKLPRNSSFARVRNRCISTGRPRSVYELFRISRIVFRSLASRGPLMGIKKSSW</sequence>
<feature type="chain" id="PRO_0000131008" description="Small ribosomal subunit protein uS14m">
    <location>
        <begin position="1"/>
        <end position="100"/>
    </location>
</feature>
<feature type="sequence conflict" description="In Ref. 1; CAA30223." evidence="1" ref="1">
    <original>S</original>
    <variation>G</variation>
    <location>
        <position position="85"/>
    </location>
</feature>
<accession>P05716</accession>
<accession>Q36214</accession>
<geneLocation type="mitochondrion"/>
<comment type="subcellular location">
    <subcellularLocation>
        <location>Mitochondrion</location>
    </subcellularLocation>
</comment>
<comment type="similarity">
    <text evidence="1">Belongs to the universal ribosomal protein uS14 family.</text>
</comment>
<protein>
    <recommendedName>
        <fullName evidence="1">Small ribosomal subunit protein uS14m</fullName>
    </recommendedName>
    <alternativeName>
        <fullName>Ribosomal protein S14, mitochondrial</fullName>
    </alternativeName>
</protein>
<organism>
    <name type="scientific">Vicia faba</name>
    <name type="common">Broad bean</name>
    <name type="synonym">Faba vulgaris</name>
    <dbReference type="NCBI Taxonomy" id="3906"/>
    <lineage>
        <taxon>Eukaryota</taxon>
        <taxon>Viridiplantae</taxon>
        <taxon>Streptophyta</taxon>
        <taxon>Embryophyta</taxon>
        <taxon>Tracheophyta</taxon>
        <taxon>Spermatophyta</taxon>
        <taxon>Magnoliopsida</taxon>
        <taxon>eudicotyledons</taxon>
        <taxon>Gunneridae</taxon>
        <taxon>Pentapetalae</taxon>
        <taxon>rosids</taxon>
        <taxon>fabids</taxon>
        <taxon>Fabales</taxon>
        <taxon>Fabaceae</taxon>
        <taxon>Papilionoideae</taxon>
        <taxon>50 kb inversion clade</taxon>
        <taxon>NPAAA clade</taxon>
        <taxon>Hologalegina</taxon>
        <taxon>IRL clade</taxon>
        <taxon>Fabeae</taxon>
        <taxon>Vicia</taxon>
    </lineage>
</organism>
<proteinExistence type="inferred from homology"/>
<reference key="1">
    <citation type="journal article" date="1988" name="Nucleic Acids Res.">
        <title>Ribosomal protein S14 genes in broad bean mitochondrial DNA.</title>
        <authorList>
            <person name="Wahleithner J.A."/>
            <person name="Wolstenholme D.R."/>
        </authorList>
    </citation>
    <scope>NUCLEOTIDE SEQUENCE [GENOMIC DNA]</scope>
</reference>
<name>RT14_VICFA</name>
<dbReference type="EMBL" id="X07237">
    <property type="protein sequence ID" value="CAA30225.1"/>
    <property type="molecule type" value="Genomic_DNA"/>
</dbReference>
<dbReference type="EMBL" id="X07236">
    <property type="protein sequence ID" value="CAA30223.1"/>
    <property type="molecule type" value="Genomic_DNA"/>
</dbReference>
<dbReference type="PIR" id="S01224">
    <property type="entry name" value="R3VF14"/>
</dbReference>
<dbReference type="SMR" id="P05716"/>
<dbReference type="GO" id="GO:0005739">
    <property type="term" value="C:mitochondrion"/>
    <property type="evidence" value="ECO:0007669"/>
    <property type="project" value="UniProtKB-SubCell"/>
</dbReference>
<dbReference type="GO" id="GO:0015935">
    <property type="term" value="C:small ribosomal subunit"/>
    <property type="evidence" value="ECO:0007669"/>
    <property type="project" value="TreeGrafter"/>
</dbReference>
<dbReference type="GO" id="GO:0003735">
    <property type="term" value="F:structural constituent of ribosome"/>
    <property type="evidence" value="ECO:0007669"/>
    <property type="project" value="InterPro"/>
</dbReference>
<dbReference type="GO" id="GO:0006412">
    <property type="term" value="P:translation"/>
    <property type="evidence" value="ECO:0007669"/>
    <property type="project" value="InterPro"/>
</dbReference>
<dbReference type="FunFam" id="1.10.287.1480:FF:000001">
    <property type="entry name" value="30S ribosomal protein S14"/>
    <property type="match status" value="1"/>
</dbReference>
<dbReference type="FunFam" id="4.10.830.10:FF:000004">
    <property type="entry name" value="Succinate dehydrogenase [ubiquinone] iron-sulfur subunit, mitochondrial"/>
    <property type="match status" value="1"/>
</dbReference>
<dbReference type="Gene3D" id="1.10.287.1480">
    <property type="match status" value="1"/>
</dbReference>
<dbReference type="InterPro" id="IPR001209">
    <property type="entry name" value="Ribosomal_uS14"/>
</dbReference>
<dbReference type="InterPro" id="IPR018271">
    <property type="entry name" value="Ribosomal_uS14_CS"/>
</dbReference>
<dbReference type="NCBIfam" id="NF006477">
    <property type="entry name" value="PRK08881.1"/>
    <property type="match status" value="1"/>
</dbReference>
<dbReference type="PANTHER" id="PTHR19836">
    <property type="entry name" value="30S RIBOSOMAL PROTEIN S14"/>
    <property type="match status" value="1"/>
</dbReference>
<dbReference type="PANTHER" id="PTHR19836:SF30">
    <property type="entry name" value="RIBOSOMAL PROTEIN S14"/>
    <property type="match status" value="1"/>
</dbReference>
<dbReference type="Pfam" id="PF00253">
    <property type="entry name" value="Ribosomal_S14"/>
    <property type="match status" value="1"/>
</dbReference>
<dbReference type="SUPFAM" id="SSF57716">
    <property type="entry name" value="Glucocorticoid receptor-like (DNA-binding domain)"/>
    <property type="match status" value="1"/>
</dbReference>
<dbReference type="PROSITE" id="PS00527">
    <property type="entry name" value="RIBOSOMAL_S14"/>
    <property type="match status" value="1"/>
</dbReference>
<evidence type="ECO:0000305" key="1"/>